<organism>
    <name type="scientific">Yersinia pseudotuberculosis serotype I (strain IP32953)</name>
    <dbReference type="NCBI Taxonomy" id="273123"/>
    <lineage>
        <taxon>Bacteria</taxon>
        <taxon>Pseudomonadati</taxon>
        <taxon>Pseudomonadota</taxon>
        <taxon>Gammaproteobacteria</taxon>
        <taxon>Enterobacterales</taxon>
        <taxon>Yersiniaceae</taxon>
        <taxon>Yersinia</taxon>
    </lineage>
</organism>
<keyword id="KW-0963">Cytoplasm</keyword>
<keyword id="KW-0489">Methyltransferase</keyword>
<keyword id="KW-0949">S-adenosyl-L-methionine</keyword>
<keyword id="KW-0808">Transferase</keyword>
<keyword id="KW-0819">tRNA processing</keyword>
<dbReference type="EC" id="2.1.1.200" evidence="1"/>
<dbReference type="EMBL" id="BX936398">
    <property type="protein sequence ID" value="CAH22099.1"/>
    <property type="molecule type" value="Genomic_DNA"/>
</dbReference>
<dbReference type="RefSeq" id="WP_002217034.1">
    <property type="nucleotide sequence ID" value="NZ_CP009712.1"/>
</dbReference>
<dbReference type="SMR" id="Q667X9"/>
<dbReference type="GeneID" id="57975855"/>
<dbReference type="KEGG" id="ypo:BZ17_3770"/>
<dbReference type="KEGG" id="yps:YPTB2861"/>
<dbReference type="PATRIC" id="fig|273123.14.peg.3956"/>
<dbReference type="Proteomes" id="UP000001011">
    <property type="component" value="Chromosome"/>
</dbReference>
<dbReference type="GO" id="GO:0005829">
    <property type="term" value="C:cytosol"/>
    <property type="evidence" value="ECO:0007669"/>
    <property type="project" value="TreeGrafter"/>
</dbReference>
<dbReference type="GO" id="GO:0003723">
    <property type="term" value="F:RNA binding"/>
    <property type="evidence" value="ECO:0007669"/>
    <property type="project" value="InterPro"/>
</dbReference>
<dbReference type="GO" id="GO:0160206">
    <property type="term" value="F:tRNA (cytidine(32)/uridine(32)-2'-O)-methyltransferase activity"/>
    <property type="evidence" value="ECO:0007669"/>
    <property type="project" value="UniProtKB-EC"/>
</dbReference>
<dbReference type="GO" id="GO:0002128">
    <property type="term" value="P:tRNA nucleoside ribose methylation"/>
    <property type="evidence" value="ECO:0007669"/>
    <property type="project" value="TreeGrafter"/>
</dbReference>
<dbReference type="CDD" id="cd18093">
    <property type="entry name" value="SpoU-like_TrmJ"/>
    <property type="match status" value="1"/>
</dbReference>
<dbReference type="FunFam" id="1.10.8.590:FF:000001">
    <property type="entry name" value="tRNA:Cm32/Um32 methyltransferase"/>
    <property type="match status" value="1"/>
</dbReference>
<dbReference type="FunFam" id="3.40.1280.10:FF:000006">
    <property type="entry name" value="Uncharacterized tRNA/rRNA methyltransferase HI_0380"/>
    <property type="match status" value="1"/>
</dbReference>
<dbReference type="Gene3D" id="1.10.8.590">
    <property type="match status" value="1"/>
</dbReference>
<dbReference type="Gene3D" id="3.40.1280.10">
    <property type="match status" value="1"/>
</dbReference>
<dbReference type="InterPro" id="IPR029028">
    <property type="entry name" value="Alpha/beta_knot_MTases"/>
</dbReference>
<dbReference type="InterPro" id="IPR004384">
    <property type="entry name" value="RNA_MeTrfase_TrmJ/LasT"/>
</dbReference>
<dbReference type="InterPro" id="IPR001537">
    <property type="entry name" value="SpoU_MeTrfase"/>
</dbReference>
<dbReference type="InterPro" id="IPR029026">
    <property type="entry name" value="tRNA_m1G_MTases_N"/>
</dbReference>
<dbReference type="NCBIfam" id="NF011694">
    <property type="entry name" value="PRK15114.1"/>
    <property type="match status" value="1"/>
</dbReference>
<dbReference type="NCBIfam" id="TIGR00050">
    <property type="entry name" value="rRNA_methyl_1"/>
    <property type="match status" value="1"/>
</dbReference>
<dbReference type="PANTHER" id="PTHR42786:SF2">
    <property type="entry name" value="TRNA (CYTIDINE_URIDINE-2'-O-)-METHYLTRANSFERASE TRMJ"/>
    <property type="match status" value="1"/>
</dbReference>
<dbReference type="PANTHER" id="PTHR42786">
    <property type="entry name" value="TRNA/RRNA METHYLTRANSFERASE"/>
    <property type="match status" value="1"/>
</dbReference>
<dbReference type="Pfam" id="PF00588">
    <property type="entry name" value="SpoU_methylase"/>
    <property type="match status" value="1"/>
</dbReference>
<dbReference type="PIRSF" id="PIRSF004808">
    <property type="entry name" value="LasT"/>
    <property type="match status" value="1"/>
</dbReference>
<dbReference type="SUPFAM" id="SSF75217">
    <property type="entry name" value="alpha/beta knot"/>
    <property type="match status" value="1"/>
</dbReference>
<comment type="function">
    <text evidence="1">Catalyzes the formation of 2'O-methylated cytidine (Cm32) or 2'O-methylated uridine (Um32) at position 32 in tRNA.</text>
</comment>
<comment type="catalytic activity">
    <reaction evidence="1">
        <text>cytidine(32) in tRNA + S-adenosyl-L-methionine = 2'-O-methylcytidine(32) in tRNA + S-adenosyl-L-homocysteine + H(+)</text>
        <dbReference type="Rhea" id="RHEA:42932"/>
        <dbReference type="Rhea" id="RHEA-COMP:10288"/>
        <dbReference type="Rhea" id="RHEA-COMP:10289"/>
        <dbReference type="ChEBI" id="CHEBI:15378"/>
        <dbReference type="ChEBI" id="CHEBI:57856"/>
        <dbReference type="ChEBI" id="CHEBI:59789"/>
        <dbReference type="ChEBI" id="CHEBI:74495"/>
        <dbReference type="ChEBI" id="CHEBI:82748"/>
        <dbReference type="EC" id="2.1.1.200"/>
    </reaction>
</comment>
<comment type="catalytic activity">
    <reaction evidence="1">
        <text>uridine(32) in tRNA + S-adenosyl-L-methionine = 2'-O-methyluridine(32) in tRNA + S-adenosyl-L-homocysteine + H(+)</text>
        <dbReference type="Rhea" id="RHEA:42936"/>
        <dbReference type="Rhea" id="RHEA-COMP:10107"/>
        <dbReference type="Rhea" id="RHEA-COMP:10290"/>
        <dbReference type="ChEBI" id="CHEBI:15378"/>
        <dbReference type="ChEBI" id="CHEBI:57856"/>
        <dbReference type="ChEBI" id="CHEBI:59789"/>
        <dbReference type="ChEBI" id="CHEBI:65315"/>
        <dbReference type="ChEBI" id="CHEBI:74478"/>
        <dbReference type="EC" id="2.1.1.200"/>
    </reaction>
</comment>
<comment type="subunit">
    <text evidence="1">Homodimer.</text>
</comment>
<comment type="subcellular location">
    <subcellularLocation>
        <location evidence="1">Cytoplasm</location>
    </subcellularLocation>
</comment>
<comment type="similarity">
    <text evidence="3">Belongs to the class IV-like SAM-binding methyltransferase superfamily. RNA methyltransferase TrmH family.</text>
</comment>
<feature type="chain" id="PRO_0000313871" description="tRNA (cytidine/uridine-2'-O-)-methyltransferase TrmJ">
    <location>
        <begin position="1"/>
        <end position="257"/>
    </location>
</feature>
<feature type="region of interest" description="Disordered" evidence="2">
    <location>
        <begin position="238"/>
        <end position="257"/>
    </location>
</feature>
<feature type="binding site" evidence="1">
    <location>
        <begin position="79"/>
        <end position="81"/>
    </location>
    <ligand>
        <name>S-adenosyl-L-methionine</name>
        <dbReference type="ChEBI" id="CHEBI:59789"/>
    </ligand>
</feature>
<feature type="binding site" evidence="1">
    <location>
        <position position="114"/>
    </location>
    <ligand>
        <name>S-adenosyl-L-methionine</name>
        <dbReference type="ChEBI" id="CHEBI:59789"/>
    </ligand>
</feature>
<feature type="binding site" evidence="1">
    <location>
        <position position="134"/>
    </location>
    <ligand>
        <name>S-adenosyl-L-methionine</name>
        <dbReference type="ChEBI" id="CHEBI:59789"/>
    </ligand>
</feature>
<feature type="binding site" evidence="1">
    <location>
        <begin position="141"/>
        <end position="143"/>
    </location>
    <ligand>
        <name>S-adenosyl-L-methionine</name>
        <dbReference type="ChEBI" id="CHEBI:59789"/>
    </ligand>
</feature>
<proteinExistence type="inferred from homology"/>
<accession>Q667X9</accession>
<protein>
    <recommendedName>
        <fullName evidence="1">tRNA (cytidine/uridine-2'-O-)-methyltransferase TrmJ</fullName>
        <ecNumber evidence="1">2.1.1.200</ecNumber>
    </recommendedName>
    <alternativeName>
        <fullName evidence="1">tRNA (cytidine(32)/uridine(32)-2'-O)-methyltransferase</fullName>
    </alternativeName>
    <alternativeName>
        <fullName evidence="1">tRNA Cm32/Um32 methyltransferase</fullName>
    </alternativeName>
</protein>
<reference key="1">
    <citation type="journal article" date="2004" name="Proc. Natl. Acad. Sci. U.S.A.">
        <title>Insights into the evolution of Yersinia pestis through whole-genome comparison with Yersinia pseudotuberculosis.</title>
        <authorList>
            <person name="Chain P.S.G."/>
            <person name="Carniel E."/>
            <person name="Larimer F.W."/>
            <person name="Lamerdin J."/>
            <person name="Stoutland P.O."/>
            <person name="Regala W.M."/>
            <person name="Georgescu A.M."/>
            <person name="Vergez L.M."/>
            <person name="Land M.L."/>
            <person name="Motin V.L."/>
            <person name="Brubaker R.R."/>
            <person name="Fowler J."/>
            <person name="Hinnebusch J."/>
            <person name="Marceau M."/>
            <person name="Medigue C."/>
            <person name="Simonet M."/>
            <person name="Chenal-Francisque V."/>
            <person name="Souza B."/>
            <person name="Dacheux D."/>
            <person name="Elliott J.M."/>
            <person name="Derbise A."/>
            <person name="Hauser L.J."/>
            <person name="Garcia E."/>
        </authorList>
    </citation>
    <scope>NUCLEOTIDE SEQUENCE [LARGE SCALE GENOMIC DNA]</scope>
    <source>
        <strain>IP32953</strain>
    </source>
</reference>
<name>TRMJ_YERPS</name>
<evidence type="ECO:0000250" key="1">
    <source>
        <dbReference type="UniProtKB" id="P0AE01"/>
    </source>
</evidence>
<evidence type="ECO:0000256" key="2">
    <source>
        <dbReference type="SAM" id="MobiDB-lite"/>
    </source>
</evidence>
<evidence type="ECO:0000305" key="3"/>
<gene>
    <name type="primary">trmJ</name>
    <name type="ordered locus">YPTB2861</name>
</gene>
<sequence length="257" mass="28385">MLHNIRIVLVETSHTGNMGSTARAMKTMGLTNLYLVNPLVKPDSQAIALSAGASDVIGKATIVDTLDEALAGCSLVVGTSARSRTLPWPMLEPRECGVRSAREAEHAPVALVFGRERVGLTNDELQKCHYHVAIPANPEYSSLNLAMAVQILAYEVRVAYLDRQQANAPVEEEEEAPYPLVDDLERFYQHLEQVLSHSGFIRQAHPGQIMSKLRRLFTRARPEAQELNILRGMLTSIEKQDKYPQRGTGDTAGKSKD</sequence>